<sequence length="142" mass="15366">MAKKVTGYLKLQVPAGAANPSPPIGPALGQRGLNIMEFCKAFNAQTQKEEKNTPIPVIITIYADRSFTFEMKTPPMSYFLKQAAKIQSGSKAPGRDKAGKVTKAQVREIAEKKMKDLNCDTIESAMKMVEGSARSMGLEVAG</sequence>
<keyword id="KW-0488">Methylation</keyword>
<keyword id="KW-1185">Reference proteome</keyword>
<keyword id="KW-0687">Ribonucleoprotein</keyword>
<keyword id="KW-0689">Ribosomal protein</keyword>
<keyword id="KW-0694">RNA-binding</keyword>
<keyword id="KW-0699">rRNA-binding</keyword>
<evidence type="ECO:0000255" key="1">
    <source>
        <dbReference type="HAMAP-Rule" id="MF_00736"/>
    </source>
</evidence>
<evidence type="ECO:0000305" key="2"/>
<comment type="function">
    <text evidence="1">Forms part of the ribosomal stalk which helps the ribosome interact with GTP-bound translation factors.</text>
</comment>
<comment type="subunit">
    <text evidence="1">Part of the ribosomal stalk of the 50S ribosomal subunit. Interacts with L10 and the large rRNA to form the base of the stalk. L10 forms an elongated spine to which L12 dimers bind in a sequential fashion forming a multimeric L10(L12)X complex.</text>
</comment>
<comment type="PTM">
    <text evidence="1">One or more lysine residues are methylated.</text>
</comment>
<comment type="similarity">
    <text evidence="1">Belongs to the universal ribosomal protein uL11 family.</text>
</comment>
<gene>
    <name evidence="1" type="primary">rplK</name>
    <name type="ordered locus">bll5415</name>
</gene>
<feature type="chain" id="PRO_0000104256" description="Large ribosomal subunit protein uL11">
    <location>
        <begin position="1"/>
        <end position="142"/>
    </location>
</feature>
<name>RL11_BRADU</name>
<protein>
    <recommendedName>
        <fullName evidence="1">Large ribosomal subunit protein uL11</fullName>
    </recommendedName>
    <alternativeName>
        <fullName evidence="2">50S ribosomal protein L11</fullName>
    </alternativeName>
</protein>
<accession>Q89J69</accession>
<proteinExistence type="inferred from homology"/>
<reference key="1">
    <citation type="journal article" date="2002" name="DNA Res.">
        <title>Complete genomic sequence of nitrogen-fixing symbiotic bacterium Bradyrhizobium japonicum USDA110.</title>
        <authorList>
            <person name="Kaneko T."/>
            <person name="Nakamura Y."/>
            <person name="Sato S."/>
            <person name="Minamisawa K."/>
            <person name="Uchiumi T."/>
            <person name="Sasamoto S."/>
            <person name="Watanabe A."/>
            <person name="Idesawa K."/>
            <person name="Iriguchi M."/>
            <person name="Kawashima K."/>
            <person name="Kohara M."/>
            <person name="Matsumoto M."/>
            <person name="Shimpo S."/>
            <person name="Tsuruoka H."/>
            <person name="Wada T."/>
            <person name="Yamada M."/>
            <person name="Tabata S."/>
        </authorList>
    </citation>
    <scope>NUCLEOTIDE SEQUENCE [LARGE SCALE GENOMIC DNA]</scope>
    <source>
        <strain>JCM 10833 / BCRC 13528 / IAM 13628 / NBRC 14792 / USDA 110</strain>
    </source>
</reference>
<organism>
    <name type="scientific">Bradyrhizobium diazoefficiens (strain JCM 10833 / BCRC 13528 / IAM 13628 / NBRC 14792 / USDA 110)</name>
    <dbReference type="NCBI Taxonomy" id="224911"/>
    <lineage>
        <taxon>Bacteria</taxon>
        <taxon>Pseudomonadati</taxon>
        <taxon>Pseudomonadota</taxon>
        <taxon>Alphaproteobacteria</taxon>
        <taxon>Hyphomicrobiales</taxon>
        <taxon>Nitrobacteraceae</taxon>
        <taxon>Bradyrhizobium</taxon>
    </lineage>
</organism>
<dbReference type="EMBL" id="BA000040">
    <property type="protein sequence ID" value="BAC50680.1"/>
    <property type="molecule type" value="Genomic_DNA"/>
</dbReference>
<dbReference type="RefSeq" id="NP_772055.1">
    <property type="nucleotide sequence ID" value="NC_004463.1"/>
</dbReference>
<dbReference type="RefSeq" id="WP_011088164.1">
    <property type="nucleotide sequence ID" value="NZ_CP011360.1"/>
</dbReference>
<dbReference type="SMR" id="Q89J69"/>
<dbReference type="FunCoup" id="Q89J69">
    <property type="interactions" value="810"/>
</dbReference>
<dbReference type="STRING" id="224911.AAV28_24485"/>
<dbReference type="EnsemblBacteria" id="BAC50680">
    <property type="protein sequence ID" value="BAC50680"/>
    <property type="gene ID" value="BAC50680"/>
</dbReference>
<dbReference type="GeneID" id="93178160"/>
<dbReference type="KEGG" id="bja:bll5415"/>
<dbReference type="PATRIC" id="fig|224911.44.peg.5315"/>
<dbReference type="eggNOG" id="COG0080">
    <property type="taxonomic scope" value="Bacteria"/>
</dbReference>
<dbReference type="HOGENOM" id="CLU_074237_2_1_5"/>
<dbReference type="InParanoid" id="Q89J69"/>
<dbReference type="OrthoDB" id="9802408at2"/>
<dbReference type="PhylomeDB" id="Q89J69"/>
<dbReference type="Proteomes" id="UP000002526">
    <property type="component" value="Chromosome"/>
</dbReference>
<dbReference type="GO" id="GO:0022625">
    <property type="term" value="C:cytosolic large ribosomal subunit"/>
    <property type="evidence" value="ECO:0000318"/>
    <property type="project" value="GO_Central"/>
</dbReference>
<dbReference type="GO" id="GO:0070180">
    <property type="term" value="F:large ribosomal subunit rRNA binding"/>
    <property type="evidence" value="ECO:0000318"/>
    <property type="project" value="GO_Central"/>
</dbReference>
<dbReference type="GO" id="GO:0003735">
    <property type="term" value="F:structural constituent of ribosome"/>
    <property type="evidence" value="ECO:0000318"/>
    <property type="project" value="GO_Central"/>
</dbReference>
<dbReference type="GO" id="GO:0006412">
    <property type="term" value="P:translation"/>
    <property type="evidence" value="ECO:0000318"/>
    <property type="project" value="GO_Central"/>
</dbReference>
<dbReference type="CDD" id="cd00349">
    <property type="entry name" value="Ribosomal_L11"/>
    <property type="match status" value="1"/>
</dbReference>
<dbReference type="FunFam" id="1.10.10.250:FF:000001">
    <property type="entry name" value="50S ribosomal protein L11"/>
    <property type="match status" value="1"/>
</dbReference>
<dbReference type="FunFam" id="3.30.1550.10:FF:000001">
    <property type="entry name" value="50S ribosomal protein L11"/>
    <property type="match status" value="1"/>
</dbReference>
<dbReference type="Gene3D" id="1.10.10.250">
    <property type="entry name" value="Ribosomal protein L11, C-terminal domain"/>
    <property type="match status" value="1"/>
</dbReference>
<dbReference type="Gene3D" id="3.30.1550.10">
    <property type="entry name" value="Ribosomal protein L11/L12, N-terminal domain"/>
    <property type="match status" value="1"/>
</dbReference>
<dbReference type="HAMAP" id="MF_00736">
    <property type="entry name" value="Ribosomal_uL11"/>
    <property type="match status" value="1"/>
</dbReference>
<dbReference type="InterPro" id="IPR000911">
    <property type="entry name" value="Ribosomal_uL11"/>
</dbReference>
<dbReference type="InterPro" id="IPR006519">
    <property type="entry name" value="Ribosomal_uL11_bac-typ"/>
</dbReference>
<dbReference type="InterPro" id="IPR020783">
    <property type="entry name" value="Ribosomal_uL11_C"/>
</dbReference>
<dbReference type="InterPro" id="IPR036769">
    <property type="entry name" value="Ribosomal_uL11_C_sf"/>
</dbReference>
<dbReference type="InterPro" id="IPR020785">
    <property type="entry name" value="Ribosomal_uL11_CS"/>
</dbReference>
<dbReference type="InterPro" id="IPR020784">
    <property type="entry name" value="Ribosomal_uL11_N"/>
</dbReference>
<dbReference type="InterPro" id="IPR036796">
    <property type="entry name" value="Ribosomal_uL11_N_sf"/>
</dbReference>
<dbReference type="NCBIfam" id="TIGR01632">
    <property type="entry name" value="L11_bact"/>
    <property type="match status" value="1"/>
</dbReference>
<dbReference type="PANTHER" id="PTHR11661">
    <property type="entry name" value="60S RIBOSOMAL PROTEIN L12"/>
    <property type="match status" value="1"/>
</dbReference>
<dbReference type="PANTHER" id="PTHR11661:SF1">
    <property type="entry name" value="LARGE RIBOSOMAL SUBUNIT PROTEIN UL11M"/>
    <property type="match status" value="1"/>
</dbReference>
<dbReference type="Pfam" id="PF00298">
    <property type="entry name" value="Ribosomal_L11"/>
    <property type="match status" value="1"/>
</dbReference>
<dbReference type="Pfam" id="PF03946">
    <property type="entry name" value="Ribosomal_L11_N"/>
    <property type="match status" value="1"/>
</dbReference>
<dbReference type="SMART" id="SM00649">
    <property type="entry name" value="RL11"/>
    <property type="match status" value="1"/>
</dbReference>
<dbReference type="SUPFAM" id="SSF54747">
    <property type="entry name" value="Ribosomal L11/L12e N-terminal domain"/>
    <property type="match status" value="1"/>
</dbReference>
<dbReference type="SUPFAM" id="SSF46906">
    <property type="entry name" value="Ribosomal protein L11, C-terminal domain"/>
    <property type="match status" value="1"/>
</dbReference>
<dbReference type="PROSITE" id="PS00359">
    <property type="entry name" value="RIBOSOMAL_L11"/>
    <property type="match status" value="1"/>
</dbReference>